<reference key="1">
    <citation type="submission" date="2006-08" db="EMBL/GenBank/DDBJ databases">
        <title>Complete sequence of chromosome 1 of Shewanella sp. MR-7.</title>
        <authorList>
            <person name="Copeland A."/>
            <person name="Lucas S."/>
            <person name="Lapidus A."/>
            <person name="Barry K."/>
            <person name="Detter J.C."/>
            <person name="Glavina del Rio T."/>
            <person name="Hammon N."/>
            <person name="Israni S."/>
            <person name="Dalin E."/>
            <person name="Tice H."/>
            <person name="Pitluck S."/>
            <person name="Kiss H."/>
            <person name="Brettin T."/>
            <person name="Bruce D."/>
            <person name="Han C."/>
            <person name="Tapia R."/>
            <person name="Gilna P."/>
            <person name="Schmutz J."/>
            <person name="Larimer F."/>
            <person name="Land M."/>
            <person name="Hauser L."/>
            <person name="Kyrpides N."/>
            <person name="Mikhailova N."/>
            <person name="Nealson K."/>
            <person name="Konstantinidis K."/>
            <person name="Klappenbach J."/>
            <person name="Tiedje J."/>
            <person name="Richardson P."/>
        </authorList>
    </citation>
    <scope>NUCLEOTIDE SEQUENCE [LARGE SCALE GENOMIC DNA]</scope>
    <source>
        <strain>MR-7</strain>
    </source>
</reference>
<evidence type="ECO:0000255" key="1">
    <source>
        <dbReference type="HAMAP-Rule" id="MF_00248"/>
    </source>
</evidence>
<dbReference type="EC" id="3.4.25.2" evidence="1"/>
<dbReference type="EMBL" id="CP000444">
    <property type="protein sequence ID" value="ABI41437.1"/>
    <property type="molecule type" value="Genomic_DNA"/>
</dbReference>
<dbReference type="SMR" id="Q0HZL8"/>
<dbReference type="MEROPS" id="T01.006"/>
<dbReference type="KEGG" id="shm:Shewmr7_0434"/>
<dbReference type="HOGENOM" id="CLU_093872_1_0_6"/>
<dbReference type="GO" id="GO:0009376">
    <property type="term" value="C:HslUV protease complex"/>
    <property type="evidence" value="ECO:0007669"/>
    <property type="project" value="UniProtKB-UniRule"/>
</dbReference>
<dbReference type="GO" id="GO:0005839">
    <property type="term" value="C:proteasome core complex"/>
    <property type="evidence" value="ECO:0007669"/>
    <property type="project" value="InterPro"/>
</dbReference>
<dbReference type="GO" id="GO:0046872">
    <property type="term" value="F:metal ion binding"/>
    <property type="evidence" value="ECO:0007669"/>
    <property type="project" value="UniProtKB-KW"/>
</dbReference>
<dbReference type="GO" id="GO:0004298">
    <property type="term" value="F:threonine-type endopeptidase activity"/>
    <property type="evidence" value="ECO:0007669"/>
    <property type="project" value="UniProtKB-KW"/>
</dbReference>
<dbReference type="GO" id="GO:0051603">
    <property type="term" value="P:proteolysis involved in protein catabolic process"/>
    <property type="evidence" value="ECO:0007669"/>
    <property type="project" value="InterPro"/>
</dbReference>
<dbReference type="CDD" id="cd01913">
    <property type="entry name" value="protease_HslV"/>
    <property type="match status" value="1"/>
</dbReference>
<dbReference type="FunFam" id="3.60.20.10:FF:000002">
    <property type="entry name" value="ATP-dependent protease subunit HslV"/>
    <property type="match status" value="1"/>
</dbReference>
<dbReference type="Gene3D" id="3.60.20.10">
    <property type="entry name" value="Glutamine Phosphoribosylpyrophosphate, subunit 1, domain 1"/>
    <property type="match status" value="1"/>
</dbReference>
<dbReference type="HAMAP" id="MF_00248">
    <property type="entry name" value="HslV"/>
    <property type="match status" value="1"/>
</dbReference>
<dbReference type="InterPro" id="IPR022281">
    <property type="entry name" value="ATP-dep_Prtase_HsIV_su"/>
</dbReference>
<dbReference type="InterPro" id="IPR029055">
    <property type="entry name" value="Ntn_hydrolases_N"/>
</dbReference>
<dbReference type="InterPro" id="IPR001353">
    <property type="entry name" value="Proteasome_sua/b"/>
</dbReference>
<dbReference type="InterPro" id="IPR023333">
    <property type="entry name" value="Proteasome_suB-type"/>
</dbReference>
<dbReference type="NCBIfam" id="TIGR03692">
    <property type="entry name" value="ATP_dep_HslV"/>
    <property type="match status" value="1"/>
</dbReference>
<dbReference type="NCBIfam" id="NF003964">
    <property type="entry name" value="PRK05456.1"/>
    <property type="match status" value="1"/>
</dbReference>
<dbReference type="PANTHER" id="PTHR32194:SF0">
    <property type="entry name" value="ATP-DEPENDENT PROTEASE SUBUNIT HSLV"/>
    <property type="match status" value="1"/>
</dbReference>
<dbReference type="PANTHER" id="PTHR32194">
    <property type="entry name" value="METALLOPROTEASE TLDD"/>
    <property type="match status" value="1"/>
</dbReference>
<dbReference type="Pfam" id="PF00227">
    <property type="entry name" value="Proteasome"/>
    <property type="match status" value="1"/>
</dbReference>
<dbReference type="PIRSF" id="PIRSF039093">
    <property type="entry name" value="HslV"/>
    <property type="match status" value="1"/>
</dbReference>
<dbReference type="SUPFAM" id="SSF56235">
    <property type="entry name" value="N-terminal nucleophile aminohydrolases (Ntn hydrolases)"/>
    <property type="match status" value="1"/>
</dbReference>
<dbReference type="PROSITE" id="PS51476">
    <property type="entry name" value="PROTEASOME_BETA_2"/>
    <property type="match status" value="1"/>
</dbReference>
<name>HSLV_SHESR</name>
<gene>
    <name evidence="1" type="primary">hslV</name>
    <name type="ordered locus">Shewmr7_0434</name>
</gene>
<accession>Q0HZL8</accession>
<organism>
    <name type="scientific">Shewanella sp. (strain MR-7)</name>
    <dbReference type="NCBI Taxonomy" id="60481"/>
    <lineage>
        <taxon>Bacteria</taxon>
        <taxon>Pseudomonadati</taxon>
        <taxon>Pseudomonadota</taxon>
        <taxon>Gammaproteobacteria</taxon>
        <taxon>Alteromonadales</taxon>
        <taxon>Shewanellaceae</taxon>
        <taxon>Shewanella</taxon>
    </lineage>
</organism>
<proteinExistence type="inferred from homology"/>
<protein>
    <recommendedName>
        <fullName evidence="1">ATP-dependent protease subunit HslV</fullName>
        <ecNumber evidence="1">3.4.25.2</ecNumber>
    </recommendedName>
</protein>
<keyword id="KW-0021">Allosteric enzyme</keyword>
<keyword id="KW-0963">Cytoplasm</keyword>
<keyword id="KW-0378">Hydrolase</keyword>
<keyword id="KW-0479">Metal-binding</keyword>
<keyword id="KW-0645">Protease</keyword>
<keyword id="KW-0915">Sodium</keyword>
<keyword id="KW-0888">Threonine protease</keyword>
<sequence length="174" mass="18918">MTTIVSVRRNNQVVIAGDGQVSLGNTVMKGNAKKVRRLYHNKVLAGFAGGTADAFTLFERFESKLEMHQGHLLRSAVELAKDWRTDRMLRKLEAMLVVADAEASLIITGNGDVVQPEHDLVAIGSGGNYAQAAALALLQNTELSALEIAEKSLTIAGDICVFTNQFKTIEELNY</sequence>
<feature type="chain" id="PRO_1000012673" description="ATP-dependent protease subunit HslV">
    <location>
        <begin position="1"/>
        <end position="174"/>
    </location>
</feature>
<feature type="active site" evidence="1">
    <location>
        <position position="2"/>
    </location>
</feature>
<feature type="binding site" evidence="1">
    <location>
        <position position="157"/>
    </location>
    <ligand>
        <name>Na(+)</name>
        <dbReference type="ChEBI" id="CHEBI:29101"/>
    </ligand>
</feature>
<feature type="binding site" evidence="1">
    <location>
        <position position="160"/>
    </location>
    <ligand>
        <name>Na(+)</name>
        <dbReference type="ChEBI" id="CHEBI:29101"/>
    </ligand>
</feature>
<feature type="binding site" evidence="1">
    <location>
        <position position="163"/>
    </location>
    <ligand>
        <name>Na(+)</name>
        <dbReference type="ChEBI" id="CHEBI:29101"/>
    </ligand>
</feature>
<comment type="function">
    <text evidence="1">Protease subunit of a proteasome-like degradation complex believed to be a general protein degrading machinery.</text>
</comment>
<comment type="catalytic activity">
    <reaction evidence="1">
        <text>ATP-dependent cleavage of peptide bonds with broad specificity.</text>
        <dbReference type="EC" id="3.4.25.2"/>
    </reaction>
</comment>
<comment type="activity regulation">
    <text evidence="1">Allosterically activated by HslU binding.</text>
</comment>
<comment type="subunit">
    <text evidence="1">A double ring-shaped homohexamer of HslV is capped on each side by a ring-shaped HslU homohexamer. The assembly of the HslU/HslV complex is dependent on binding of ATP.</text>
</comment>
<comment type="subcellular location">
    <subcellularLocation>
        <location evidence="1">Cytoplasm</location>
    </subcellularLocation>
</comment>
<comment type="similarity">
    <text evidence="1">Belongs to the peptidase T1B family. HslV subfamily.</text>
</comment>